<geneLocation type="chloroplast"/>
<organism>
    <name type="scientific">Lachenalia pusilla</name>
    <name type="common">Cape cowslips</name>
    <name type="synonym">Polyxena pusilla</name>
    <dbReference type="NCBI Taxonomy" id="208124"/>
    <lineage>
        <taxon>Eukaryota</taxon>
        <taxon>Viridiplantae</taxon>
        <taxon>Streptophyta</taxon>
        <taxon>Embryophyta</taxon>
        <taxon>Tracheophyta</taxon>
        <taxon>Spermatophyta</taxon>
        <taxon>Magnoliopsida</taxon>
        <taxon>Liliopsida</taxon>
        <taxon>Asparagales</taxon>
        <taxon>Hyacinthaceae</taxon>
        <taxon>Hyacinthoideae</taxon>
        <taxon>Massonieae</taxon>
        <taxon>Lachenalia</taxon>
    </lineage>
</organism>
<name>ATPB_LACPU</name>
<reference key="1">
    <citation type="journal article" date="2003" name="J. Plant Res.">
        <title>Phylogenetic relationships among genera of Massonieae (Hyacinthaceae) inferred from plastid DNA and seed morphology.</title>
        <authorList>
            <person name="Pfosser M.F."/>
            <person name="Wetschnig W."/>
            <person name="Ungar S."/>
            <person name="Prenner G."/>
        </authorList>
    </citation>
    <scope>NUCLEOTIDE SEQUENCE [GENOMIC DNA]</scope>
</reference>
<sequence length="493" mass="53064">MNPTTSGSAVSTLEEKNLGRIAQIIGPVLDVVFPLGKMPNIYNALVVKGRDTVGQQINVTCEVQQLLGNNRVRAVAMSATDGLTRGMEVIDTGAALSVPVGGATLGRIFNVLGEPVDNLGPVDTRTTSPIHRSAPAFIQLDTKLSIFETGIKVVDLLAPYRRGGKIGLFGGAGVGKTVLIMELINNIAKAHGGVSVFGGVGERTREGNDLYMEMKESGVINEKNIAESKVALVYGQMNEPPGARMRVGLTALTMAEYFRDVNEQDVLLFIDNIFRFVQAGSEVSALLGRMPSAVGYQPTLSTEMGSLQERITSTKEGSITSIQAVYVPADDLTDPAPATTFAHLDATTVLSRGLAAKGIYPAVDPLDSTSTMLQPRIVGEEHYETAQRVKQTLQRYKELQDIIAILGLDELSEEDRLTVARARKIERFLSQPFFVAEVFTGSPGKYVGLTETIRGFQLILSGELDGLPEQAFYLVGNIDEATAKAMNLEGEKK</sequence>
<keyword id="KW-0066">ATP synthesis</keyword>
<keyword id="KW-0067">ATP-binding</keyword>
<keyword id="KW-0139">CF(1)</keyword>
<keyword id="KW-0150">Chloroplast</keyword>
<keyword id="KW-0375">Hydrogen ion transport</keyword>
<keyword id="KW-0406">Ion transport</keyword>
<keyword id="KW-0472">Membrane</keyword>
<keyword id="KW-0547">Nucleotide-binding</keyword>
<keyword id="KW-0934">Plastid</keyword>
<keyword id="KW-0793">Thylakoid</keyword>
<keyword id="KW-1278">Translocase</keyword>
<keyword id="KW-0813">Transport</keyword>
<evidence type="ECO:0000255" key="1">
    <source>
        <dbReference type="HAMAP-Rule" id="MF_01347"/>
    </source>
</evidence>
<accession>Q85V35</accession>
<comment type="function">
    <text evidence="1">Produces ATP from ADP in the presence of a proton gradient across the membrane. The catalytic sites are hosted primarily by the beta subunits.</text>
</comment>
<comment type="catalytic activity">
    <reaction evidence="1">
        <text>ATP + H2O + 4 H(+)(in) = ADP + phosphate + 5 H(+)(out)</text>
        <dbReference type="Rhea" id="RHEA:57720"/>
        <dbReference type="ChEBI" id="CHEBI:15377"/>
        <dbReference type="ChEBI" id="CHEBI:15378"/>
        <dbReference type="ChEBI" id="CHEBI:30616"/>
        <dbReference type="ChEBI" id="CHEBI:43474"/>
        <dbReference type="ChEBI" id="CHEBI:456216"/>
        <dbReference type="EC" id="7.1.2.2"/>
    </reaction>
</comment>
<comment type="subunit">
    <text evidence="1">F-type ATPases have 2 components, CF(1) - the catalytic core - and CF(0) - the membrane proton channel. CF(1) has five subunits: alpha(3), beta(3), gamma(1), delta(1), epsilon(1). CF(0) has four main subunits: a(1), b(1), b'(1) and c(9-12).</text>
</comment>
<comment type="subcellular location">
    <subcellularLocation>
        <location evidence="1">Plastid</location>
        <location evidence="1">Chloroplast thylakoid membrane</location>
        <topology evidence="1">Peripheral membrane protein</topology>
    </subcellularLocation>
</comment>
<comment type="similarity">
    <text evidence="1">Belongs to the ATPase alpha/beta chains family.</text>
</comment>
<gene>
    <name evidence="1" type="primary">atpB</name>
</gene>
<protein>
    <recommendedName>
        <fullName evidence="1">ATP synthase subunit beta, chloroplastic</fullName>
        <ecNumber evidence="1">7.1.2.2</ecNumber>
    </recommendedName>
    <alternativeName>
        <fullName evidence="1">ATP synthase F1 sector subunit beta</fullName>
    </alternativeName>
    <alternativeName>
        <fullName evidence="1">F-ATPase subunit beta</fullName>
    </alternativeName>
</protein>
<dbReference type="EC" id="7.1.2.2" evidence="1"/>
<dbReference type="EMBL" id="AJ508207">
    <property type="protein sequence ID" value="CAD48109.1"/>
    <property type="molecule type" value="Genomic_DNA"/>
</dbReference>
<dbReference type="SMR" id="Q85V35"/>
<dbReference type="GO" id="GO:0009535">
    <property type="term" value="C:chloroplast thylakoid membrane"/>
    <property type="evidence" value="ECO:0007669"/>
    <property type="project" value="UniProtKB-SubCell"/>
</dbReference>
<dbReference type="GO" id="GO:0005739">
    <property type="term" value="C:mitochondrion"/>
    <property type="evidence" value="ECO:0007669"/>
    <property type="project" value="GOC"/>
</dbReference>
<dbReference type="GO" id="GO:0045259">
    <property type="term" value="C:proton-transporting ATP synthase complex"/>
    <property type="evidence" value="ECO:0007669"/>
    <property type="project" value="UniProtKB-KW"/>
</dbReference>
<dbReference type="GO" id="GO:0005524">
    <property type="term" value="F:ATP binding"/>
    <property type="evidence" value="ECO:0007669"/>
    <property type="project" value="UniProtKB-UniRule"/>
</dbReference>
<dbReference type="GO" id="GO:0016887">
    <property type="term" value="F:ATP hydrolysis activity"/>
    <property type="evidence" value="ECO:0007669"/>
    <property type="project" value="InterPro"/>
</dbReference>
<dbReference type="GO" id="GO:0046933">
    <property type="term" value="F:proton-transporting ATP synthase activity, rotational mechanism"/>
    <property type="evidence" value="ECO:0007669"/>
    <property type="project" value="UniProtKB-UniRule"/>
</dbReference>
<dbReference type="GO" id="GO:0042776">
    <property type="term" value="P:proton motive force-driven mitochondrial ATP synthesis"/>
    <property type="evidence" value="ECO:0007669"/>
    <property type="project" value="TreeGrafter"/>
</dbReference>
<dbReference type="CDD" id="cd18110">
    <property type="entry name" value="ATP-synt_F1_beta_C"/>
    <property type="match status" value="1"/>
</dbReference>
<dbReference type="CDD" id="cd18115">
    <property type="entry name" value="ATP-synt_F1_beta_N"/>
    <property type="match status" value="1"/>
</dbReference>
<dbReference type="CDD" id="cd01133">
    <property type="entry name" value="F1-ATPase_beta_CD"/>
    <property type="match status" value="1"/>
</dbReference>
<dbReference type="FunFam" id="1.10.1140.10:FF:000001">
    <property type="entry name" value="ATP synthase subunit beta"/>
    <property type="match status" value="1"/>
</dbReference>
<dbReference type="FunFam" id="3.40.50.300:FF:000004">
    <property type="entry name" value="ATP synthase subunit beta"/>
    <property type="match status" value="1"/>
</dbReference>
<dbReference type="FunFam" id="2.40.10.170:FF:000002">
    <property type="entry name" value="ATP synthase subunit beta, chloroplastic"/>
    <property type="match status" value="1"/>
</dbReference>
<dbReference type="Gene3D" id="2.40.10.170">
    <property type="match status" value="1"/>
</dbReference>
<dbReference type="Gene3D" id="1.10.1140.10">
    <property type="entry name" value="Bovine Mitochondrial F1-atpase, Atp Synthase Beta Chain, Chain D, domain 3"/>
    <property type="match status" value="1"/>
</dbReference>
<dbReference type="Gene3D" id="3.40.50.300">
    <property type="entry name" value="P-loop containing nucleotide triphosphate hydrolases"/>
    <property type="match status" value="1"/>
</dbReference>
<dbReference type="HAMAP" id="MF_01347">
    <property type="entry name" value="ATP_synth_beta_bact"/>
    <property type="match status" value="1"/>
</dbReference>
<dbReference type="InterPro" id="IPR003593">
    <property type="entry name" value="AAA+_ATPase"/>
</dbReference>
<dbReference type="InterPro" id="IPR055190">
    <property type="entry name" value="ATP-synt_VA_C"/>
</dbReference>
<dbReference type="InterPro" id="IPR005722">
    <property type="entry name" value="ATP_synth_F1_bsu"/>
</dbReference>
<dbReference type="InterPro" id="IPR020003">
    <property type="entry name" value="ATPase_a/bsu_AS"/>
</dbReference>
<dbReference type="InterPro" id="IPR050053">
    <property type="entry name" value="ATPase_alpha/beta_chains"/>
</dbReference>
<dbReference type="InterPro" id="IPR004100">
    <property type="entry name" value="ATPase_F1/V1/A1_a/bsu_N"/>
</dbReference>
<dbReference type="InterPro" id="IPR036121">
    <property type="entry name" value="ATPase_F1/V1/A1_a/bsu_N_sf"/>
</dbReference>
<dbReference type="InterPro" id="IPR000194">
    <property type="entry name" value="ATPase_F1/V1/A1_a/bsu_nucl-bd"/>
</dbReference>
<dbReference type="InterPro" id="IPR024034">
    <property type="entry name" value="ATPase_F1/V1_b/a_C"/>
</dbReference>
<dbReference type="InterPro" id="IPR027417">
    <property type="entry name" value="P-loop_NTPase"/>
</dbReference>
<dbReference type="NCBIfam" id="TIGR01039">
    <property type="entry name" value="atpD"/>
    <property type="match status" value="1"/>
</dbReference>
<dbReference type="PANTHER" id="PTHR15184">
    <property type="entry name" value="ATP SYNTHASE"/>
    <property type="match status" value="1"/>
</dbReference>
<dbReference type="PANTHER" id="PTHR15184:SF71">
    <property type="entry name" value="ATP SYNTHASE SUBUNIT BETA, MITOCHONDRIAL"/>
    <property type="match status" value="1"/>
</dbReference>
<dbReference type="Pfam" id="PF00006">
    <property type="entry name" value="ATP-synt_ab"/>
    <property type="match status" value="1"/>
</dbReference>
<dbReference type="Pfam" id="PF02874">
    <property type="entry name" value="ATP-synt_ab_N"/>
    <property type="match status" value="1"/>
</dbReference>
<dbReference type="Pfam" id="PF22919">
    <property type="entry name" value="ATP-synt_VA_C"/>
    <property type="match status" value="1"/>
</dbReference>
<dbReference type="SMART" id="SM00382">
    <property type="entry name" value="AAA"/>
    <property type="match status" value="1"/>
</dbReference>
<dbReference type="SUPFAM" id="SSF47917">
    <property type="entry name" value="C-terminal domain of alpha and beta subunits of F1 ATP synthase"/>
    <property type="match status" value="1"/>
</dbReference>
<dbReference type="SUPFAM" id="SSF50615">
    <property type="entry name" value="N-terminal domain of alpha and beta subunits of F1 ATP synthase"/>
    <property type="match status" value="1"/>
</dbReference>
<dbReference type="SUPFAM" id="SSF52540">
    <property type="entry name" value="P-loop containing nucleoside triphosphate hydrolases"/>
    <property type="match status" value="1"/>
</dbReference>
<dbReference type="PROSITE" id="PS00152">
    <property type="entry name" value="ATPASE_ALPHA_BETA"/>
    <property type="match status" value="1"/>
</dbReference>
<proteinExistence type="inferred from homology"/>
<feature type="chain" id="PRO_0000254492" description="ATP synthase subunit beta, chloroplastic">
    <location>
        <begin position="1"/>
        <end position="493"/>
    </location>
</feature>
<feature type="binding site" evidence="1">
    <location>
        <begin position="170"/>
        <end position="177"/>
    </location>
    <ligand>
        <name>ATP</name>
        <dbReference type="ChEBI" id="CHEBI:30616"/>
    </ligand>
</feature>